<gene>
    <name type="primary">SKG1</name>
    <name type="ORF">EC1118_1K5_3697g</name>
</gene>
<keyword id="KW-1003">Cell membrane</keyword>
<keyword id="KW-0961">Cell wall biogenesis/degradation</keyword>
<keyword id="KW-0472">Membrane</keyword>
<keyword id="KW-0597">Phosphoprotein</keyword>
<keyword id="KW-0735">Signal-anchor</keyword>
<keyword id="KW-0812">Transmembrane</keyword>
<keyword id="KW-1133">Transmembrane helix</keyword>
<feature type="chain" id="PRO_0000399676" description="Suppressor of lethality of KEX2 GAS1 double null mutant protein 1">
    <location>
        <begin position="1"/>
        <end position="355"/>
    </location>
</feature>
<feature type="topological domain" description="Extracellular" evidence="3">
    <location>
        <begin position="1"/>
        <end position="8"/>
    </location>
</feature>
<feature type="transmembrane region" description="Helical; Signal-anchor for type III membrane protein" evidence="3">
    <location>
        <begin position="9"/>
        <end position="29"/>
    </location>
</feature>
<feature type="topological domain" description="Cytoplasmic" evidence="3">
    <location>
        <begin position="30"/>
        <end position="355"/>
    </location>
</feature>
<feature type="region of interest" description="Disordered" evidence="4">
    <location>
        <begin position="70"/>
        <end position="114"/>
    </location>
</feature>
<feature type="region of interest" description="Disordered" evidence="4">
    <location>
        <begin position="276"/>
        <end position="298"/>
    </location>
</feature>
<feature type="compositionally biased region" description="Basic and acidic residues" evidence="4">
    <location>
        <begin position="92"/>
        <end position="108"/>
    </location>
</feature>
<feature type="compositionally biased region" description="Basic and acidic residues" evidence="4">
    <location>
        <begin position="286"/>
        <end position="298"/>
    </location>
</feature>
<feature type="modified residue" description="Phosphoserine" evidence="2">
    <location>
        <position position="142"/>
    </location>
</feature>
<feature type="modified residue" description="Phosphothreonine" evidence="2">
    <location>
        <position position="273"/>
    </location>
</feature>
<sequence>MTASTSVAVGCAVGIPVGVGIIIAVCFWFNLQKRYKREEQDDRELERAIYDESGFVSFDNFGPLRDSKDEAALASSELKNPDHTSGSSEGSAHPEEKDGKSRDQEKPLGKKNSKYYVPAYRRKINLLQVRNNNYGNNARQKSVVDLPSINNSSNVSLSSSQRHITKRQISVYDQMVPVISDEGPKFFADPSSDTNTSNDQNKASMIELKHNTRQSINENLIRKLQNQDFGSYYPRRASSSFLNGNISNASFHTRNSSITSVNKRDALEDVFATPKSAAQSQLPNTFDKDNEGIDADHSVKDSRSAITDKDKDIYKLQNNYDVGNIGEIAEEDQYENEFTNYSQSKREFIESLRPK</sequence>
<protein>
    <recommendedName>
        <fullName>Suppressor of lethality of KEX2 GAS1 double null mutant protein 1</fullName>
    </recommendedName>
</protein>
<dbReference type="EMBL" id="FN393077">
    <property type="protein sequence ID" value="CAY81175.1"/>
    <property type="molecule type" value="Genomic_DNA"/>
</dbReference>
<dbReference type="HOGENOM" id="CLU_079389_0_0_1"/>
<dbReference type="OrthoDB" id="41861at4893"/>
<dbReference type="Proteomes" id="UP000000286">
    <property type="component" value="Chromosome XI, Scaffold EC1118_1K5"/>
</dbReference>
<dbReference type="GO" id="GO:0033101">
    <property type="term" value="C:cellular bud membrane"/>
    <property type="evidence" value="ECO:0007669"/>
    <property type="project" value="UniProtKB-SubCell"/>
</dbReference>
<dbReference type="GO" id="GO:0071555">
    <property type="term" value="P:cell wall organization"/>
    <property type="evidence" value="ECO:0007669"/>
    <property type="project" value="UniProtKB-KW"/>
</dbReference>
<accession>C8ZCQ9</accession>
<proteinExistence type="inferred from homology"/>
<reference key="1">
    <citation type="journal article" date="2009" name="Proc. Natl. Acad. Sci. U.S.A.">
        <title>Eukaryote-to-eukaryote gene transfer events revealed by the genome sequence of the wine yeast Saccharomyces cerevisiae EC1118.</title>
        <authorList>
            <person name="Novo M."/>
            <person name="Bigey F."/>
            <person name="Beyne E."/>
            <person name="Galeote V."/>
            <person name="Gavory F."/>
            <person name="Mallet S."/>
            <person name="Cambon B."/>
            <person name="Legras J.-L."/>
            <person name="Wincker P."/>
            <person name="Casaregola S."/>
            <person name="Dequin S."/>
        </authorList>
    </citation>
    <scope>NUCLEOTIDE SEQUENCE [LARGE SCALE GENOMIC DNA]</scope>
    <source>
        <strain>Lalvin EC1118 / Prise de mousse</strain>
    </source>
</reference>
<name>SKG1_YEAS8</name>
<comment type="function">
    <text evidence="1">Plays a role in cell wall integrity. Affects the cell wall polymer composition in the growing region of the cell (By similarity).</text>
</comment>
<comment type="subcellular location">
    <subcellularLocation>
        <location evidence="1">Cell membrane</location>
        <topology evidence="1">Single-pass type III membrane protein</topology>
        <orientation evidence="1">Cytoplasmic side</orientation>
    </subcellularLocation>
    <subcellularLocation>
        <location evidence="1">Bud membrane</location>
        <topology evidence="1">Single-pass type III membrane protein</topology>
        <orientation evidence="1">Cytoplasmic side</orientation>
    </subcellularLocation>
    <text evidence="1">Localizes on the inner surface of the plasma membrane at the bud and in the daughter cell. Localizes at an incipient bud site in the cells with emerging buds, a bud tip in small- or medium-budded cells, and a cell periphery in large-budded cells.</text>
</comment>
<comment type="similarity">
    <text evidence="5">Belongs to the SKG1 family.</text>
</comment>
<organism>
    <name type="scientific">Saccharomyces cerevisiae (strain Lalvin EC1118 / Prise de mousse)</name>
    <name type="common">Baker's yeast</name>
    <dbReference type="NCBI Taxonomy" id="643680"/>
    <lineage>
        <taxon>Eukaryota</taxon>
        <taxon>Fungi</taxon>
        <taxon>Dikarya</taxon>
        <taxon>Ascomycota</taxon>
        <taxon>Saccharomycotina</taxon>
        <taxon>Saccharomycetes</taxon>
        <taxon>Saccharomycetales</taxon>
        <taxon>Saccharomycetaceae</taxon>
        <taxon>Saccharomyces</taxon>
    </lineage>
</organism>
<evidence type="ECO:0000250" key="1"/>
<evidence type="ECO:0000250" key="2">
    <source>
        <dbReference type="UniProtKB" id="P36169"/>
    </source>
</evidence>
<evidence type="ECO:0000255" key="3"/>
<evidence type="ECO:0000256" key="4">
    <source>
        <dbReference type="SAM" id="MobiDB-lite"/>
    </source>
</evidence>
<evidence type="ECO:0000305" key="5"/>